<comment type="function">
    <text evidence="2">Component of the cytochrome b6-f complex, which mediates electron transfer between photosystem II (PSII) and photosystem I (PSI), cyclic electron flow around PSI, and state transitions.</text>
</comment>
<comment type="cofactor">
    <cofactor evidence="2">
        <name>heme b</name>
        <dbReference type="ChEBI" id="CHEBI:60344"/>
    </cofactor>
    <text evidence="2">Binds 2 heme b groups non-covalently with two histidine residues as axial ligands.</text>
</comment>
<comment type="cofactor">
    <cofactor evidence="2">
        <name>heme c</name>
        <dbReference type="ChEBI" id="CHEBI:61717"/>
    </cofactor>
    <text evidence="2">Binds one heme group covalently by a single cysteine link with no axial amino acid ligand. This heme was named heme ci.</text>
</comment>
<comment type="subunit">
    <text evidence="2">The 4 large subunits of the cytochrome b6-f complex are cytochrome b6, subunit IV (17 kDa polypeptide, PetD), cytochrome f and the Rieske protein, while the 4 small subunits are PetG, PetL, PetM and PetN. The complex functions as a dimer.</text>
</comment>
<comment type="subcellular location">
    <subcellularLocation>
        <location evidence="2">Plastid</location>
        <location evidence="2">Chloroplast thylakoid membrane</location>
        <topology evidence="2">Multi-pass membrane protein</topology>
    </subcellularLocation>
</comment>
<comment type="RNA editing">
    <location>
        <position position="204" evidence="1"/>
    </location>
</comment>
<comment type="miscellaneous">
    <text evidence="2">Heme 1 (or BH or b566) is high-potential and absorbs at about 566 nm, and heme 2 (or BL or b562) is low-potential and absorbs at about 562 nm.</text>
</comment>
<comment type="similarity">
    <text evidence="2">Belongs to the cytochrome b family. PetB subfamily.</text>
</comment>
<feature type="chain" id="PRO_0000061811" description="Cytochrome b6">
    <location>
        <begin position="1"/>
        <end position="215"/>
    </location>
</feature>
<feature type="transmembrane region" description="Helical" evidence="2">
    <location>
        <begin position="32"/>
        <end position="52"/>
    </location>
</feature>
<feature type="transmembrane region" description="Helical" evidence="2">
    <location>
        <begin position="90"/>
        <end position="110"/>
    </location>
</feature>
<feature type="transmembrane region" description="Helical" evidence="2">
    <location>
        <begin position="116"/>
        <end position="136"/>
    </location>
</feature>
<feature type="transmembrane region" description="Helical" evidence="2">
    <location>
        <begin position="186"/>
        <end position="206"/>
    </location>
</feature>
<feature type="binding site" description="covalent" evidence="2">
    <location>
        <position position="35"/>
    </location>
    <ligand>
        <name>heme c</name>
        <dbReference type="ChEBI" id="CHEBI:61717"/>
    </ligand>
</feature>
<feature type="binding site" description="axial binding residue" evidence="2">
    <location>
        <position position="86"/>
    </location>
    <ligand>
        <name>heme b</name>
        <dbReference type="ChEBI" id="CHEBI:60344"/>
        <label>2</label>
    </ligand>
    <ligandPart>
        <name>Fe</name>
        <dbReference type="ChEBI" id="CHEBI:18248"/>
    </ligandPart>
</feature>
<feature type="binding site" description="axial binding residue" evidence="2">
    <location>
        <position position="100"/>
    </location>
    <ligand>
        <name>heme b</name>
        <dbReference type="ChEBI" id="CHEBI:60344"/>
        <label>1</label>
    </ligand>
    <ligandPart>
        <name>Fe</name>
        <dbReference type="ChEBI" id="CHEBI:18248"/>
    </ligandPart>
</feature>
<feature type="binding site" description="axial binding residue" evidence="2">
    <location>
        <position position="187"/>
    </location>
    <ligand>
        <name>heme b</name>
        <dbReference type="ChEBI" id="CHEBI:60344"/>
        <label>2</label>
    </ligand>
    <ligandPart>
        <name>Fe</name>
        <dbReference type="ChEBI" id="CHEBI:18248"/>
    </ligandPart>
</feature>
<feature type="binding site" description="axial binding residue" evidence="2">
    <location>
        <position position="202"/>
    </location>
    <ligand>
        <name>heme b</name>
        <dbReference type="ChEBI" id="CHEBI:60344"/>
        <label>1</label>
    </ligand>
    <ligandPart>
        <name>Fe</name>
        <dbReference type="ChEBI" id="CHEBI:18248"/>
    </ligandPart>
</feature>
<sequence>MSKVYDWFEERLEIQAIADDITSKYVPPHVNIFYCLGGITLTCFLVQVATGFAMTFYYRPTVTEAFASVQYIMTEANFGWLIRSVHRWSASMMVLMMILHVFRVYLTGGFKKPRELTWVTGVVLGVLTATFGVTGYSLPWDQIGYWAVKFVTGVPDAIPVIGSSXVELLPASASVGQSTLTRFYSLHTFVLPLLTAVFMLMHFLMIRKQGIFGPL</sequence>
<organism>
    <name type="scientific">Pisum sativum</name>
    <name type="common">Garden pea</name>
    <name type="synonym">Lathyrus oleraceus</name>
    <dbReference type="NCBI Taxonomy" id="3888"/>
    <lineage>
        <taxon>Eukaryota</taxon>
        <taxon>Viridiplantae</taxon>
        <taxon>Streptophyta</taxon>
        <taxon>Embryophyta</taxon>
        <taxon>Tracheophyta</taxon>
        <taxon>Spermatophyta</taxon>
        <taxon>Magnoliopsida</taxon>
        <taxon>eudicotyledons</taxon>
        <taxon>Gunneridae</taxon>
        <taxon>Pentapetalae</taxon>
        <taxon>rosids</taxon>
        <taxon>fabids</taxon>
        <taxon>Fabales</taxon>
        <taxon>Fabaceae</taxon>
        <taxon>Papilionoideae</taxon>
        <taxon>50 kb inversion clade</taxon>
        <taxon>NPAAA clade</taxon>
        <taxon>Hologalegina</taxon>
        <taxon>IRL clade</taxon>
        <taxon>Fabeae</taxon>
        <taxon>Pisum</taxon>
    </lineage>
</organism>
<dbReference type="EMBL" id="AF153442">
    <property type="protein sequence ID" value="AAD41888.1"/>
    <property type="status" value="ALT_SEQ"/>
    <property type="molecule type" value="Genomic_DNA"/>
</dbReference>
<dbReference type="GO" id="GO:0009535">
    <property type="term" value="C:chloroplast thylakoid membrane"/>
    <property type="evidence" value="ECO:0007669"/>
    <property type="project" value="UniProtKB-SubCell"/>
</dbReference>
<dbReference type="GO" id="GO:0045158">
    <property type="term" value="F:electron transporter, transferring electrons within cytochrome b6/f complex of photosystem II activity"/>
    <property type="evidence" value="ECO:0007669"/>
    <property type="project" value="UniProtKB-UniRule"/>
</dbReference>
<dbReference type="GO" id="GO:0046872">
    <property type="term" value="F:metal ion binding"/>
    <property type="evidence" value="ECO:0007669"/>
    <property type="project" value="UniProtKB-KW"/>
</dbReference>
<dbReference type="GO" id="GO:0016491">
    <property type="term" value="F:oxidoreductase activity"/>
    <property type="evidence" value="ECO:0007669"/>
    <property type="project" value="InterPro"/>
</dbReference>
<dbReference type="GO" id="GO:0015979">
    <property type="term" value="P:photosynthesis"/>
    <property type="evidence" value="ECO:0007669"/>
    <property type="project" value="UniProtKB-UniRule"/>
</dbReference>
<dbReference type="GO" id="GO:0022904">
    <property type="term" value="P:respiratory electron transport chain"/>
    <property type="evidence" value="ECO:0007669"/>
    <property type="project" value="InterPro"/>
</dbReference>
<dbReference type="CDD" id="cd00284">
    <property type="entry name" value="Cytochrome_b_N"/>
    <property type="match status" value="1"/>
</dbReference>
<dbReference type="FunFam" id="1.20.810.10:FF:000001">
    <property type="entry name" value="Cytochrome b6"/>
    <property type="match status" value="1"/>
</dbReference>
<dbReference type="Gene3D" id="1.20.810.10">
    <property type="entry name" value="Cytochrome Bc1 Complex, Chain C"/>
    <property type="match status" value="1"/>
</dbReference>
<dbReference type="HAMAP" id="MF_00633">
    <property type="entry name" value="Cytb6_f_cytb6"/>
    <property type="match status" value="1"/>
</dbReference>
<dbReference type="InterPro" id="IPR005797">
    <property type="entry name" value="Cyt_b/b6_N"/>
</dbReference>
<dbReference type="InterPro" id="IPR023530">
    <property type="entry name" value="Cyt_B6_PetB"/>
</dbReference>
<dbReference type="InterPro" id="IPR027387">
    <property type="entry name" value="Cytb/b6-like_sf"/>
</dbReference>
<dbReference type="InterPro" id="IPR048259">
    <property type="entry name" value="Cytochrome_b_N_euk/bac"/>
</dbReference>
<dbReference type="InterPro" id="IPR016174">
    <property type="entry name" value="Di-haem_cyt_TM"/>
</dbReference>
<dbReference type="NCBIfam" id="NF002990">
    <property type="entry name" value="PRK03735.1"/>
    <property type="match status" value="1"/>
</dbReference>
<dbReference type="PANTHER" id="PTHR19271">
    <property type="entry name" value="CYTOCHROME B"/>
    <property type="match status" value="1"/>
</dbReference>
<dbReference type="PANTHER" id="PTHR19271:SF16">
    <property type="entry name" value="CYTOCHROME B"/>
    <property type="match status" value="1"/>
</dbReference>
<dbReference type="Pfam" id="PF00033">
    <property type="entry name" value="Cytochrome_B"/>
    <property type="match status" value="1"/>
</dbReference>
<dbReference type="PIRSF" id="PIRSF000032">
    <property type="entry name" value="Cytochrome_b6"/>
    <property type="match status" value="1"/>
</dbReference>
<dbReference type="SUPFAM" id="SSF81342">
    <property type="entry name" value="Transmembrane di-heme cytochromes"/>
    <property type="match status" value="1"/>
</dbReference>
<dbReference type="PROSITE" id="PS51002">
    <property type="entry name" value="CYTB_NTER"/>
    <property type="match status" value="1"/>
</dbReference>
<protein>
    <recommendedName>
        <fullName evidence="2">Cytochrome b6</fullName>
    </recommendedName>
</protein>
<evidence type="ECO:0000250" key="1"/>
<evidence type="ECO:0000255" key="2">
    <source>
        <dbReference type="HAMAP-Rule" id="MF_00633"/>
    </source>
</evidence>
<accession>Q9XQR2</accession>
<gene>
    <name evidence="2" type="primary">petB</name>
</gene>
<geneLocation type="chloroplast"/>
<keyword id="KW-0150">Chloroplast</keyword>
<keyword id="KW-0249">Electron transport</keyword>
<keyword id="KW-0349">Heme</keyword>
<keyword id="KW-0408">Iron</keyword>
<keyword id="KW-0472">Membrane</keyword>
<keyword id="KW-0479">Metal-binding</keyword>
<keyword id="KW-0602">Photosynthesis</keyword>
<keyword id="KW-0934">Plastid</keyword>
<keyword id="KW-0691">RNA editing</keyword>
<keyword id="KW-0793">Thylakoid</keyword>
<keyword id="KW-0812">Transmembrane</keyword>
<keyword id="KW-1133">Transmembrane helix</keyword>
<keyword id="KW-0813">Transport</keyword>
<name>CYB6_PEA</name>
<proteinExistence type="inferred from homology"/>
<reference key="1">
    <citation type="journal article" date="1989" name="Physiol. Plantarum">
        <title>Nucleotide sequence of the 5.6 kbp psbB operon of pea chloroplast DNA.</title>
        <authorList>
            <person name="Lehmbeck J."/>
            <person name="Stummann B.M."/>
            <person name="Henningsen K.W."/>
        </authorList>
    </citation>
    <scope>NUCLEOTIDE SEQUENCE [GENOMIC DNA]</scope>
</reference>